<protein>
    <recommendedName>
        <fullName>Complement C1q-like protein 2</fullName>
    </recommendedName>
    <alternativeName>
        <fullName>C1q and tumor necrosis factor-related protein 10</fullName>
        <shortName>C1q/TNF-related protein 10</shortName>
        <shortName>C1qTNF10</shortName>
        <shortName>CTRP10</shortName>
    </alternativeName>
</protein>
<gene>
    <name type="primary">C1ql2</name>
    <name type="synonym">C1qtnf10</name>
    <name type="synonym">Ctrp10</name>
</gene>
<keyword id="KW-0002">3D-structure</keyword>
<keyword id="KW-0176">Collagen</keyword>
<keyword id="KW-0325">Glycoprotein</keyword>
<keyword id="KW-1185">Reference proteome</keyword>
<keyword id="KW-0964">Secreted</keyword>
<keyword id="KW-0732">Signal</keyword>
<comment type="function">
    <text evidence="5">May regulate the number of excitatory synapses that are formed on hippocampus neurons. Has no effect on inhibitory synapses.</text>
</comment>
<comment type="subunit">
    <text evidence="4 5 6 7 8">Forms homotrimers which can further assemble to form higher-order oligomeric complexes. Interacts with ADGRB3. May interact with ERFE. Forms heterooligomers with C1QL3 and C1QL4, when proteins are coexpressed; this interaction does not occur after secretion.</text>
</comment>
<comment type="subcellular location">
    <subcellularLocation>
        <location evidence="4">Secreted</location>
    </subcellularLocation>
</comment>
<comment type="tissue specificity">
    <text evidence="4">Highest expression in eye, followed by placenta and brain, intermediate expression in adipose tissue and lowest expression in lymph node and testis.</text>
</comment>
<comment type="PTM">
    <text evidence="4">Glycosylated, but not with N-linked glycans.</text>
</comment>
<dbReference type="EMBL" id="DQ002402">
    <property type="protein sequence ID" value="AAY21934.1"/>
    <property type="molecule type" value="mRNA"/>
</dbReference>
<dbReference type="EMBL" id="AK144471">
    <property type="protein sequence ID" value="BAE25906.1"/>
    <property type="molecule type" value="mRNA"/>
</dbReference>
<dbReference type="EMBL" id="BC040774">
    <property type="protein sequence ID" value="AAH40774.1"/>
    <property type="molecule type" value="mRNA"/>
</dbReference>
<dbReference type="CCDS" id="CCDS15233.1"/>
<dbReference type="RefSeq" id="NP_997116.1">
    <property type="nucleotide sequence ID" value="NM_207233.1"/>
</dbReference>
<dbReference type="PDB" id="4QPY">
    <property type="method" value="X-ray"/>
    <property type="resolution" value="2.38 A"/>
    <property type="chains" value="A/B/C=152-287"/>
</dbReference>
<dbReference type="PDBsum" id="4QPY"/>
<dbReference type="SMR" id="Q8CFR0"/>
<dbReference type="DIP" id="DIP-59698N"/>
<dbReference type="FunCoup" id="Q8CFR0">
    <property type="interactions" value="17"/>
</dbReference>
<dbReference type="IntAct" id="Q8CFR0">
    <property type="interactions" value="2"/>
</dbReference>
<dbReference type="STRING" id="10090.ENSMUSP00000037257"/>
<dbReference type="PaxDb" id="10090-ENSMUSP00000037257"/>
<dbReference type="PeptideAtlas" id="Q8CFR0"/>
<dbReference type="ProteomicsDB" id="273804"/>
<dbReference type="Antibodypedia" id="58204">
    <property type="antibodies" value="97 antibodies from 21 providers"/>
</dbReference>
<dbReference type="DNASU" id="226359"/>
<dbReference type="Ensembl" id="ENSMUST00000037286.12">
    <property type="protein sequence ID" value="ENSMUSP00000037257.11"/>
    <property type="gene ID" value="ENSMUSG00000036907.12"/>
</dbReference>
<dbReference type="GeneID" id="226359"/>
<dbReference type="KEGG" id="mmu:226359"/>
<dbReference type="UCSC" id="uc007cjk.1">
    <property type="organism name" value="mouse"/>
</dbReference>
<dbReference type="AGR" id="MGI:3032521"/>
<dbReference type="CTD" id="165257"/>
<dbReference type="MGI" id="MGI:3032521">
    <property type="gene designation" value="C1ql2"/>
</dbReference>
<dbReference type="VEuPathDB" id="HostDB:ENSMUSG00000036907"/>
<dbReference type="eggNOG" id="ENOG502QUZ7">
    <property type="taxonomic scope" value="Eukaryota"/>
</dbReference>
<dbReference type="GeneTree" id="ENSGT00940000156913"/>
<dbReference type="HOGENOM" id="CLU_001074_3_1_1"/>
<dbReference type="InParanoid" id="Q8CFR0"/>
<dbReference type="OMA" id="GHYEMMG"/>
<dbReference type="OrthoDB" id="10070467at2759"/>
<dbReference type="PhylomeDB" id="Q8CFR0"/>
<dbReference type="TreeFam" id="TF329591"/>
<dbReference type="BioGRID-ORCS" id="226359">
    <property type="hits" value="0 hits in 78 CRISPR screens"/>
</dbReference>
<dbReference type="EvolutionaryTrace" id="Q8CFR0"/>
<dbReference type="PRO" id="PR:Q8CFR0"/>
<dbReference type="Proteomes" id="UP000000589">
    <property type="component" value="Chromosome 1"/>
</dbReference>
<dbReference type="RNAct" id="Q8CFR0">
    <property type="molecule type" value="protein"/>
</dbReference>
<dbReference type="Bgee" id="ENSMUSG00000036907">
    <property type="expression patterns" value="Expressed in dentate gyrus of hippocampal formation granule cell and 44 other cell types or tissues"/>
</dbReference>
<dbReference type="ExpressionAtlas" id="Q8CFR0">
    <property type="expression patterns" value="baseline and differential"/>
</dbReference>
<dbReference type="GO" id="GO:0150053">
    <property type="term" value="C:cerebellar climbing fiber to Purkinje cell synapse"/>
    <property type="evidence" value="ECO:0000314"/>
    <property type="project" value="SynGO"/>
</dbReference>
<dbReference type="GO" id="GO:0005581">
    <property type="term" value="C:collagen trimer"/>
    <property type="evidence" value="ECO:0007669"/>
    <property type="project" value="UniProtKB-KW"/>
</dbReference>
<dbReference type="GO" id="GO:0005576">
    <property type="term" value="C:extracellular region"/>
    <property type="evidence" value="ECO:0000314"/>
    <property type="project" value="MGI"/>
</dbReference>
<dbReference type="GO" id="GO:0098978">
    <property type="term" value="C:glutamatergic synapse"/>
    <property type="evidence" value="ECO:0000314"/>
    <property type="project" value="SynGO"/>
</dbReference>
<dbReference type="GO" id="GO:0098686">
    <property type="term" value="C:hippocampal mossy fiber to CA3 synapse"/>
    <property type="evidence" value="ECO:0000314"/>
    <property type="project" value="SynGO"/>
</dbReference>
<dbReference type="GO" id="GO:0032991">
    <property type="term" value="C:protein-containing complex"/>
    <property type="evidence" value="ECO:0000314"/>
    <property type="project" value="MGI"/>
</dbReference>
<dbReference type="GO" id="GO:0043083">
    <property type="term" value="C:synaptic cleft"/>
    <property type="evidence" value="ECO:0000314"/>
    <property type="project" value="SynGO"/>
</dbReference>
<dbReference type="GO" id="GO:0042802">
    <property type="term" value="F:identical protein binding"/>
    <property type="evidence" value="ECO:0000314"/>
    <property type="project" value="MGI"/>
</dbReference>
<dbReference type="GO" id="GO:0099645">
    <property type="term" value="P:neurotransmitter receptor localization to postsynaptic specialization membrane"/>
    <property type="evidence" value="ECO:0000314"/>
    <property type="project" value="SynGO"/>
</dbReference>
<dbReference type="GO" id="GO:0097107">
    <property type="term" value="P:postsynaptic density assembly"/>
    <property type="evidence" value="ECO:0000314"/>
    <property type="project" value="SynGO"/>
</dbReference>
<dbReference type="GO" id="GO:0090128">
    <property type="term" value="P:regulation of synapse maturation"/>
    <property type="evidence" value="ECO:0000314"/>
    <property type="project" value="SynGO"/>
</dbReference>
<dbReference type="FunFam" id="2.60.120.40:FF:000001">
    <property type="entry name" value="Complement C1q B chain"/>
    <property type="match status" value="1"/>
</dbReference>
<dbReference type="Gene3D" id="2.60.120.40">
    <property type="match status" value="1"/>
</dbReference>
<dbReference type="InterPro" id="IPR001073">
    <property type="entry name" value="C1q_dom"/>
</dbReference>
<dbReference type="InterPro" id="IPR050822">
    <property type="entry name" value="Cerebellin_Synaptic_Org"/>
</dbReference>
<dbReference type="InterPro" id="IPR008983">
    <property type="entry name" value="Tumour_necrosis_fac-like_dom"/>
</dbReference>
<dbReference type="PANTHER" id="PTHR22923">
    <property type="entry name" value="CEREBELLIN-RELATED"/>
    <property type="match status" value="1"/>
</dbReference>
<dbReference type="PANTHER" id="PTHR22923:SF69">
    <property type="entry name" value="COMPLEMENT C1Q-LIKE PROTEIN 2"/>
    <property type="match status" value="1"/>
</dbReference>
<dbReference type="Pfam" id="PF00386">
    <property type="entry name" value="C1q"/>
    <property type="match status" value="1"/>
</dbReference>
<dbReference type="PRINTS" id="PR00007">
    <property type="entry name" value="COMPLEMNTC1Q"/>
</dbReference>
<dbReference type="SMART" id="SM00110">
    <property type="entry name" value="C1Q"/>
    <property type="match status" value="1"/>
</dbReference>
<dbReference type="SUPFAM" id="SSF49842">
    <property type="entry name" value="TNF-like"/>
    <property type="match status" value="1"/>
</dbReference>
<dbReference type="PROSITE" id="PS50871">
    <property type="entry name" value="C1Q"/>
    <property type="match status" value="1"/>
</dbReference>
<name>C1QL2_MOUSE</name>
<accession>Q8CFR0</accession>
<feature type="signal peptide" evidence="1">
    <location>
        <begin position="1"/>
        <end position="21"/>
    </location>
</feature>
<feature type="chain" id="PRO_0000274336" description="Complement C1q-like protein 2">
    <location>
        <begin position="22"/>
        <end position="287"/>
    </location>
</feature>
<feature type="domain" description="Collagen-like">
    <location>
        <begin position="76"/>
        <end position="118"/>
    </location>
</feature>
<feature type="domain" description="C1q" evidence="2">
    <location>
        <begin position="154"/>
        <end position="287"/>
    </location>
</feature>
<feature type="region of interest" description="Disordered" evidence="3">
    <location>
        <begin position="65"/>
        <end position="144"/>
    </location>
</feature>
<feature type="compositionally biased region" description="Pro residues" evidence="3">
    <location>
        <begin position="84"/>
        <end position="104"/>
    </location>
</feature>
<feature type="compositionally biased region" description="Gly residues" evidence="3">
    <location>
        <begin position="127"/>
        <end position="141"/>
    </location>
</feature>
<feature type="mutagenesis site" description="No effect on homotrimer formation, but loss of higher-order oligomeric complexes; when associated with A-33. Does not affect heterooligomerization with C1QL4; when associated with A-33." evidence="4 8">
    <original>C</original>
    <variation>A</variation>
    <location>
        <position position="29"/>
    </location>
</feature>
<feature type="mutagenesis site" description="No effect on homotrimer formation, but loss of higher-order oligomeric complexes; when associated with A-29. Does not affect heterooligomerization with C1QL4; when associated with A-29." evidence="4 8">
    <original>C</original>
    <variation>A</variation>
    <location>
        <position position="33"/>
    </location>
</feature>
<feature type="strand" evidence="9">
    <location>
        <begin position="160"/>
        <end position="164"/>
    </location>
</feature>
<feature type="strand" evidence="9">
    <location>
        <begin position="179"/>
        <end position="184"/>
    </location>
</feature>
<feature type="turn" evidence="9">
    <location>
        <begin position="190"/>
        <end position="192"/>
    </location>
</feature>
<feature type="strand" evidence="9">
    <location>
        <begin position="201"/>
        <end position="212"/>
    </location>
</feature>
<feature type="strand" evidence="9">
    <location>
        <begin position="215"/>
        <end position="217"/>
    </location>
</feature>
<feature type="strand" evidence="9">
    <location>
        <begin position="219"/>
        <end position="225"/>
    </location>
</feature>
<feature type="strand" evidence="9">
    <location>
        <begin position="228"/>
        <end position="235"/>
    </location>
</feature>
<feature type="strand" evidence="9">
    <location>
        <begin position="239"/>
        <end position="241"/>
    </location>
</feature>
<feature type="strand" evidence="9">
    <location>
        <begin position="243"/>
        <end position="253"/>
    </location>
</feature>
<feature type="strand" evidence="9">
    <location>
        <begin position="258"/>
        <end position="268"/>
    </location>
</feature>
<feature type="strand" evidence="9">
    <location>
        <begin position="272"/>
        <end position="274"/>
    </location>
</feature>
<feature type="strand" evidence="9">
    <location>
        <begin position="278"/>
        <end position="286"/>
    </location>
</feature>
<proteinExistence type="evidence at protein level"/>
<organism>
    <name type="scientific">Mus musculus</name>
    <name type="common">Mouse</name>
    <dbReference type="NCBI Taxonomy" id="10090"/>
    <lineage>
        <taxon>Eukaryota</taxon>
        <taxon>Metazoa</taxon>
        <taxon>Chordata</taxon>
        <taxon>Craniata</taxon>
        <taxon>Vertebrata</taxon>
        <taxon>Euteleostomi</taxon>
        <taxon>Mammalia</taxon>
        <taxon>Eutheria</taxon>
        <taxon>Euarchontoglires</taxon>
        <taxon>Glires</taxon>
        <taxon>Rodentia</taxon>
        <taxon>Myomorpha</taxon>
        <taxon>Muroidea</taxon>
        <taxon>Muridae</taxon>
        <taxon>Murinae</taxon>
        <taxon>Mus</taxon>
        <taxon>Mus</taxon>
    </lineage>
</organism>
<evidence type="ECO:0000255" key="1"/>
<evidence type="ECO:0000255" key="2">
    <source>
        <dbReference type="PROSITE-ProRule" id="PRU00368"/>
    </source>
</evidence>
<evidence type="ECO:0000256" key="3">
    <source>
        <dbReference type="SAM" id="MobiDB-lite"/>
    </source>
</evidence>
<evidence type="ECO:0000269" key="4">
    <source>
    </source>
</evidence>
<evidence type="ECO:0000269" key="5">
    <source>
    </source>
</evidence>
<evidence type="ECO:0000269" key="6">
    <source>
    </source>
</evidence>
<evidence type="ECO:0000269" key="7">
    <source>
    </source>
</evidence>
<evidence type="ECO:0000269" key="8">
    <source>
    </source>
</evidence>
<evidence type="ECO:0007829" key="9">
    <source>
        <dbReference type="PDB" id="4QPY"/>
    </source>
</evidence>
<reference key="1">
    <citation type="journal article" date="2008" name="Biochem. J.">
        <title>Molecular, biochemical and functional characterizations of C1q/TNF family members: adipose-tissue-selective expression patterns, regulation by PPAR-gamma agonist, cysteine-mediated oligomerizations, combinatorial associations and metabolic functions.</title>
        <authorList>
            <person name="Wong G.W."/>
            <person name="Krawczyk S.A."/>
            <person name="Kitidis-Mitrokostas C."/>
            <person name="Revett T."/>
            <person name="Gimeno R."/>
            <person name="Lodish H.F."/>
        </authorList>
    </citation>
    <scope>NUCLEOTIDE SEQUENCE [MRNA]</scope>
    <scope>SUBUNIT</scope>
    <scope>SUBCELLULAR LOCATION</scope>
    <scope>TISSUE SPECIFICITY</scope>
    <scope>GLYCOSYLATION</scope>
    <scope>MUTAGENESIS OF CYS-29 AND CYS-33</scope>
    <source>
        <strain>C57BL/6J</strain>
    </source>
</reference>
<reference key="2">
    <citation type="journal article" date="2005" name="Science">
        <title>The transcriptional landscape of the mammalian genome.</title>
        <authorList>
            <person name="Carninci P."/>
            <person name="Kasukawa T."/>
            <person name="Katayama S."/>
            <person name="Gough J."/>
            <person name="Frith M.C."/>
            <person name="Maeda N."/>
            <person name="Oyama R."/>
            <person name="Ravasi T."/>
            <person name="Lenhard B."/>
            <person name="Wells C."/>
            <person name="Kodzius R."/>
            <person name="Shimokawa K."/>
            <person name="Bajic V.B."/>
            <person name="Brenner S.E."/>
            <person name="Batalov S."/>
            <person name="Forrest A.R."/>
            <person name="Zavolan M."/>
            <person name="Davis M.J."/>
            <person name="Wilming L.G."/>
            <person name="Aidinis V."/>
            <person name="Allen J.E."/>
            <person name="Ambesi-Impiombato A."/>
            <person name="Apweiler R."/>
            <person name="Aturaliya R.N."/>
            <person name="Bailey T.L."/>
            <person name="Bansal M."/>
            <person name="Baxter L."/>
            <person name="Beisel K.W."/>
            <person name="Bersano T."/>
            <person name="Bono H."/>
            <person name="Chalk A.M."/>
            <person name="Chiu K.P."/>
            <person name="Choudhary V."/>
            <person name="Christoffels A."/>
            <person name="Clutterbuck D.R."/>
            <person name="Crowe M.L."/>
            <person name="Dalla E."/>
            <person name="Dalrymple B.P."/>
            <person name="de Bono B."/>
            <person name="Della Gatta G."/>
            <person name="di Bernardo D."/>
            <person name="Down T."/>
            <person name="Engstrom P."/>
            <person name="Fagiolini M."/>
            <person name="Faulkner G."/>
            <person name="Fletcher C.F."/>
            <person name="Fukushima T."/>
            <person name="Furuno M."/>
            <person name="Futaki S."/>
            <person name="Gariboldi M."/>
            <person name="Georgii-Hemming P."/>
            <person name="Gingeras T.R."/>
            <person name="Gojobori T."/>
            <person name="Green R.E."/>
            <person name="Gustincich S."/>
            <person name="Harbers M."/>
            <person name="Hayashi Y."/>
            <person name="Hensch T.K."/>
            <person name="Hirokawa N."/>
            <person name="Hill D."/>
            <person name="Huminiecki L."/>
            <person name="Iacono M."/>
            <person name="Ikeo K."/>
            <person name="Iwama A."/>
            <person name="Ishikawa T."/>
            <person name="Jakt M."/>
            <person name="Kanapin A."/>
            <person name="Katoh M."/>
            <person name="Kawasawa Y."/>
            <person name="Kelso J."/>
            <person name="Kitamura H."/>
            <person name="Kitano H."/>
            <person name="Kollias G."/>
            <person name="Krishnan S.P."/>
            <person name="Kruger A."/>
            <person name="Kummerfeld S.K."/>
            <person name="Kurochkin I.V."/>
            <person name="Lareau L.F."/>
            <person name="Lazarevic D."/>
            <person name="Lipovich L."/>
            <person name="Liu J."/>
            <person name="Liuni S."/>
            <person name="McWilliam S."/>
            <person name="Madan Babu M."/>
            <person name="Madera M."/>
            <person name="Marchionni L."/>
            <person name="Matsuda H."/>
            <person name="Matsuzawa S."/>
            <person name="Miki H."/>
            <person name="Mignone F."/>
            <person name="Miyake S."/>
            <person name="Morris K."/>
            <person name="Mottagui-Tabar S."/>
            <person name="Mulder N."/>
            <person name="Nakano N."/>
            <person name="Nakauchi H."/>
            <person name="Ng P."/>
            <person name="Nilsson R."/>
            <person name="Nishiguchi S."/>
            <person name="Nishikawa S."/>
            <person name="Nori F."/>
            <person name="Ohara O."/>
            <person name="Okazaki Y."/>
            <person name="Orlando V."/>
            <person name="Pang K.C."/>
            <person name="Pavan W.J."/>
            <person name="Pavesi G."/>
            <person name="Pesole G."/>
            <person name="Petrovsky N."/>
            <person name="Piazza S."/>
            <person name="Reed J."/>
            <person name="Reid J.F."/>
            <person name="Ring B.Z."/>
            <person name="Ringwald M."/>
            <person name="Rost B."/>
            <person name="Ruan Y."/>
            <person name="Salzberg S.L."/>
            <person name="Sandelin A."/>
            <person name="Schneider C."/>
            <person name="Schoenbach C."/>
            <person name="Sekiguchi K."/>
            <person name="Semple C.A."/>
            <person name="Seno S."/>
            <person name="Sessa L."/>
            <person name="Sheng Y."/>
            <person name="Shibata Y."/>
            <person name="Shimada H."/>
            <person name="Shimada K."/>
            <person name="Silva D."/>
            <person name="Sinclair B."/>
            <person name="Sperling S."/>
            <person name="Stupka E."/>
            <person name="Sugiura K."/>
            <person name="Sultana R."/>
            <person name="Takenaka Y."/>
            <person name="Taki K."/>
            <person name="Tammoja K."/>
            <person name="Tan S.L."/>
            <person name="Tang S."/>
            <person name="Taylor M.S."/>
            <person name="Tegner J."/>
            <person name="Teichmann S.A."/>
            <person name="Ueda H.R."/>
            <person name="van Nimwegen E."/>
            <person name="Verardo R."/>
            <person name="Wei C.L."/>
            <person name="Yagi K."/>
            <person name="Yamanishi H."/>
            <person name="Zabarovsky E."/>
            <person name="Zhu S."/>
            <person name="Zimmer A."/>
            <person name="Hide W."/>
            <person name="Bult C."/>
            <person name="Grimmond S.M."/>
            <person name="Teasdale R.D."/>
            <person name="Liu E.T."/>
            <person name="Brusic V."/>
            <person name="Quackenbush J."/>
            <person name="Wahlestedt C."/>
            <person name="Mattick J.S."/>
            <person name="Hume D.A."/>
            <person name="Kai C."/>
            <person name="Sasaki D."/>
            <person name="Tomaru Y."/>
            <person name="Fukuda S."/>
            <person name="Kanamori-Katayama M."/>
            <person name="Suzuki M."/>
            <person name="Aoki J."/>
            <person name="Arakawa T."/>
            <person name="Iida J."/>
            <person name="Imamura K."/>
            <person name="Itoh M."/>
            <person name="Kato T."/>
            <person name="Kawaji H."/>
            <person name="Kawagashira N."/>
            <person name="Kawashima T."/>
            <person name="Kojima M."/>
            <person name="Kondo S."/>
            <person name="Konno H."/>
            <person name="Nakano K."/>
            <person name="Ninomiya N."/>
            <person name="Nishio T."/>
            <person name="Okada M."/>
            <person name="Plessy C."/>
            <person name="Shibata K."/>
            <person name="Shiraki T."/>
            <person name="Suzuki S."/>
            <person name="Tagami M."/>
            <person name="Waki K."/>
            <person name="Watahiki A."/>
            <person name="Okamura-Oho Y."/>
            <person name="Suzuki H."/>
            <person name="Kawai J."/>
            <person name="Hayashizaki Y."/>
        </authorList>
    </citation>
    <scope>NUCLEOTIDE SEQUENCE [LARGE SCALE MRNA]</scope>
    <source>
        <strain>C57BL/6J</strain>
        <tissue>Brain</tissue>
    </source>
</reference>
<reference key="3">
    <citation type="journal article" date="2004" name="Genome Res.">
        <title>The status, quality, and expansion of the NIH full-length cDNA project: the Mammalian Gene Collection (MGC).</title>
        <authorList>
            <consortium name="The MGC Project Team"/>
        </authorList>
    </citation>
    <scope>NUCLEOTIDE SEQUENCE [LARGE SCALE MRNA]</scope>
    <source>
        <tissue>Eye</tissue>
    </source>
</reference>
<reference key="4">
    <citation type="journal article" date="2011" name="J. Biol. Chem.">
        <title>Metabolic regulation by C1q/TNF-related protein-13 (CTRP13): activation OF AMP-activated protein kinase and suppression of fatty acid-induced JNK signaling.</title>
        <authorList>
            <person name="Wei Z."/>
            <person name="Peterson J.M."/>
            <person name="Wong G.W."/>
        </authorList>
    </citation>
    <scope>INTERACTION WITH C1QL3</scope>
</reference>
<reference key="5">
    <citation type="journal article" date="2011" name="Proc. Natl. Acad. Sci. U.S.A.">
        <title>The cell-adhesion G protein-coupled receptor BAI3 is a high-affinity receptor for C1q-like proteins.</title>
        <authorList>
            <person name="Bolliger M.F."/>
            <person name="Martinelli D.C."/>
            <person name="Sudhof T.C."/>
        </authorList>
    </citation>
    <scope>FUNCTION</scope>
    <scope>INTERACTION WITH ADGRB3</scope>
</reference>
<reference key="6">
    <citation type="journal article" date="2012" name="J. Biol. Chem.">
        <title>Myonectin (CTRP15), a novel myokine that links skeletal muscle to systemic lipid homeostasis.</title>
        <authorList>
            <person name="Seldin M.M."/>
            <person name="Peterson J.M."/>
            <person name="Byerly M.S."/>
            <person name="Wei Z."/>
            <person name="Wong G.W."/>
        </authorList>
    </citation>
    <scope>INTERACTION WITH ERFE</scope>
</reference>
<reference key="7">
    <citation type="journal article" date="2013" name="J. Biol. Chem.">
        <title>C1q/tumor necrosis factor-related protein 11 (CTRP11), a novel adipose stroma-derived regulator of adipogenesis.</title>
        <authorList>
            <person name="Wei Z."/>
            <person name="Seldin M.M."/>
            <person name="Natarajan N."/>
            <person name="Djemal D.C."/>
            <person name="Peterson J.M."/>
            <person name="Wong G.W."/>
        </authorList>
    </citation>
    <scope>INTERACTION WITH C1QL4</scope>
    <scope>MUTAGENESIS OF CYS-29 AND CYS-33</scope>
    <source>
        <strain>C57BL/6J</strain>
        <tissue>Testis</tissue>
    </source>
</reference>
<sequence>MALGLLIAVPLLLQAAPPGAAHYEMLGTCRMICDPYSVAPAGGPAGAKAPPPGPSTAALEVMQDLSANPPPPFIQGPKGDPGRPGKPGPRGPPGEPGPPGPRGPPGEKGDSGRPGLPGLQLTTSAAGGVGVVSGGTGGGGDTEGEVTSALSAAFSGPKIAFYVGLKSPHEGYEVLKFDDVVTNLGNHYDPTTGKFSCQVRGIYFFTYHILMRGGDGTSMWADLCKNGQVRASAIAQDADQNYDYASNSVVLHLDSGDEVYVKLDGGKAHGGNNNKYSTFSGFLLYPD</sequence>